<organism>
    <name type="scientific">Rhodopseudomonas palustris (strain BisA53)</name>
    <dbReference type="NCBI Taxonomy" id="316055"/>
    <lineage>
        <taxon>Bacteria</taxon>
        <taxon>Pseudomonadati</taxon>
        <taxon>Pseudomonadota</taxon>
        <taxon>Alphaproteobacteria</taxon>
        <taxon>Hyphomicrobiales</taxon>
        <taxon>Nitrobacteraceae</taxon>
        <taxon>Rhodopseudomonas</taxon>
    </lineage>
</organism>
<dbReference type="EC" id="4.2.1.20" evidence="1"/>
<dbReference type="EMBL" id="CP000463">
    <property type="protein sequence ID" value="ABJ04414.1"/>
    <property type="molecule type" value="Genomic_DNA"/>
</dbReference>
<dbReference type="SMR" id="Q07UH0"/>
<dbReference type="STRING" id="316055.RPE_0455"/>
<dbReference type="KEGG" id="rpe:RPE_0455"/>
<dbReference type="eggNOG" id="COG0159">
    <property type="taxonomic scope" value="Bacteria"/>
</dbReference>
<dbReference type="HOGENOM" id="CLU_016734_0_0_5"/>
<dbReference type="OrthoDB" id="9804578at2"/>
<dbReference type="UniPathway" id="UPA00035">
    <property type="reaction ID" value="UER00044"/>
</dbReference>
<dbReference type="GO" id="GO:0005829">
    <property type="term" value="C:cytosol"/>
    <property type="evidence" value="ECO:0007669"/>
    <property type="project" value="TreeGrafter"/>
</dbReference>
<dbReference type="GO" id="GO:0004834">
    <property type="term" value="F:tryptophan synthase activity"/>
    <property type="evidence" value="ECO:0007669"/>
    <property type="project" value="UniProtKB-UniRule"/>
</dbReference>
<dbReference type="CDD" id="cd04724">
    <property type="entry name" value="Tryptophan_synthase_alpha"/>
    <property type="match status" value="1"/>
</dbReference>
<dbReference type="FunFam" id="3.20.20.70:FF:000037">
    <property type="entry name" value="Tryptophan synthase alpha chain"/>
    <property type="match status" value="1"/>
</dbReference>
<dbReference type="Gene3D" id="3.20.20.70">
    <property type="entry name" value="Aldolase class I"/>
    <property type="match status" value="1"/>
</dbReference>
<dbReference type="HAMAP" id="MF_00131">
    <property type="entry name" value="Trp_synth_alpha"/>
    <property type="match status" value="1"/>
</dbReference>
<dbReference type="InterPro" id="IPR013785">
    <property type="entry name" value="Aldolase_TIM"/>
</dbReference>
<dbReference type="InterPro" id="IPR011060">
    <property type="entry name" value="RibuloseP-bd_barrel"/>
</dbReference>
<dbReference type="InterPro" id="IPR018204">
    <property type="entry name" value="Trp_synthase_alpha_AS"/>
</dbReference>
<dbReference type="InterPro" id="IPR002028">
    <property type="entry name" value="Trp_synthase_suA"/>
</dbReference>
<dbReference type="NCBIfam" id="TIGR00262">
    <property type="entry name" value="trpA"/>
    <property type="match status" value="1"/>
</dbReference>
<dbReference type="PANTHER" id="PTHR43406:SF1">
    <property type="entry name" value="TRYPTOPHAN SYNTHASE ALPHA CHAIN, CHLOROPLASTIC"/>
    <property type="match status" value="1"/>
</dbReference>
<dbReference type="PANTHER" id="PTHR43406">
    <property type="entry name" value="TRYPTOPHAN SYNTHASE, ALPHA CHAIN"/>
    <property type="match status" value="1"/>
</dbReference>
<dbReference type="Pfam" id="PF00290">
    <property type="entry name" value="Trp_syntA"/>
    <property type="match status" value="1"/>
</dbReference>
<dbReference type="SUPFAM" id="SSF51366">
    <property type="entry name" value="Ribulose-phoshate binding barrel"/>
    <property type="match status" value="1"/>
</dbReference>
<dbReference type="PROSITE" id="PS00167">
    <property type="entry name" value="TRP_SYNTHASE_ALPHA"/>
    <property type="match status" value="1"/>
</dbReference>
<evidence type="ECO:0000255" key="1">
    <source>
        <dbReference type="HAMAP-Rule" id="MF_00131"/>
    </source>
</evidence>
<proteinExistence type="inferred from homology"/>
<accession>Q07UH0</accession>
<reference key="1">
    <citation type="submission" date="2006-09" db="EMBL/GenBank/DDBJ databases">
        <title>Complete sequence of Rhodopseudomonas palustris BisA53.</title>
        <authorList>
            <consortium name="US DOE Joint Genome Institute"/>
            <person name="Copeland A."/>
            <person name="Lucas S."/>
            <person name="Lapidus A."/>
            <person name="Barry K."/>
            <person name="Detter J.C."/>
            <person name="Glavina del Rio T."/>
            <person name="Hammon N."/>
            <person name="Israni S."/>
            <person name="Dalin E."/>
            <person name="Tice H."/>
            <person name="Pitluck S."/>
            <person name="Chain P."/>
            <person name="Malfatti S."/>
            <person name="Shin M."/>
            <person name="Vergez L."/>
            <person name="Schmutz J."/>
            <person name="Larimer F."/>
            <person name="Land M."/>
            <person name="Hauser L."/>
            <person name="Pelletier D.A."/>
            <person name="Kyrpides N."/>
            <person name="Kim E."/>
            <person name="Harwood C.S."/>
            <person name="Oda Y."/>
            <person name="Richardson P."/>
        </authorList>
    </citation>
    <scope>NUCLEOTIDE SEQUENCE [LARGE SCALE GENOMIC DNA]</scope>
    <source>
        <strain>BisA53</strain>
    </source>
</reference>
<keyword id="KW-0028">Amino-acid biosynthesis</keyword>
<keyword id="KW-0057">Aromatic amino acid biosynthesis</keyword>
<keyword id="KW-0456">Lyase</keyword>
<keyword id="KW-0822">Tryptophan biosynthesis</keyword>
<feature type="chain" id="PRO_1000018269" description="Tryptophan synthase alpha chain">
    <location>
        <begin position="1"/>
        <end position="278"/>
    </location>
</feature>
<feature type="active site" description="Proton acceptor" evidence="1">
    <location>
        <position position="50"/>
    </location>
</feature>
<feature type="active site" description="Proton acceptor" evidence="1">
    <location>
        <position position="61"/>
    </location>
</feature>
<gene>
    <name evidence="1" type="primary">trpA</name>
    <name type="ordered locus">RPE_0455</name>
</gene>
<name>TRPA_RHOP5</name>
<sequence length="278" mass="28880">MTTRLDSRFADLKKQGRAAFVTFLMAGDPDLDTSLKLLQALPKAGADIIEIGMPFTDPMADGPAIQAAGLRALKAGTTLQKTLELVRAFRKADDATPLVLMGYYNPIYIYGVEPFLIDAKAAGVDGLIIVDLPPEEDAELCLPAIKAGLNFIRLATPTTDDKRLPAVLANTSGFVYYVSVTGITGAASADASAVSAAVTRIKRHTPLPVCVGFGIRTPEGARDIARHADGAVVGSALVDVLSRSLDAEGRATAATVPAVADLVASLARGVHGAAQAAE</sequence>
<protein>
    <recommendedName>
        <fullName evidence="1">Tryptophan synthase alpha chain</fullName>
        <ecNumber evidence="1">4.2.1.20</ecNumber>
    </recommendedName>
</protein>
<comment type="function">
    <text evidence="1">The alpha subunit is responsible for the aldol cleavage of indoleglycerol phosphate to indole and glyceraldehyde 3-phosphate.</text>
</comment>
<comment type="catalytic activity">
    <reaction evidence="1">
        <text>(1S,2R)-1-C-(indol-3-yl)glycerol 3-phosphate + L-serine = D-glyceraldehyde 3-phosphate + L-tryptophan + H2O</text>
        <dbReference type="Rhea" id="RHEA:10532"/>
        <dbReference type="ChEBI" id="CHEBI:15377"/>
        <dbReference type="ChEBI" id="CHEBI:33384"/>
        <dbReference type="ChEBI" id="CHEBI:57912"/>
        <dbReference type="ChEBI" id="CHEBI:58866"/>
        <dbReference type="ChEBI" id="CHEBI:59776"/>
        <dbReference type="EC" id="4.2.1.20"/>
    </reaction>
</comment>
<comment type="pathway">
    <text evidence="1">Amino-acid biosynthesis; L-tryptophan biosynthesis; L-tryptophan from chorismate: step 5/5.</text>
</comment>
<comment type="subunit">
    <text evidence="1">Tetramer of two alpha and two beta chains.</text>
</comment>
<comment type="similarity">
    <text evidence="1">Belongs to the TrpA family.</text>
</comment>